<sequence length="180" mass="18475">MKLRFISSALAAALFAATGSYAAVVDGGTIHFEGELVNAACSVNTDSADQVVTLGQYRTDIFNAVGNTSALIPFTIQLNDCDPVVAANAAVAFSGQADAINDNLLAIASSTNTTTATGVGIEILDNTSAILKPDGNSFSTNQNLIPGTNVLHFSARYKGTGTSASAGQANADATFIMRYE</sequence>
<accession>P0ABW6</accession>
<accession>P77660</accession>
<reference key="1">
    <citation type="journal article" date="2001" name="Nature">
        <title>Genome sequence of enterohaemorrhagic Escherichia coli O157:H7.</title>
        <authorList>
            <person name="Perna N.T."/>
            <person name="Plunkett G. III"/>
            <person name="Burland V."/>
            <person name="Mau B."/>
            <person name="Glasner J.D."/>
            <person name="Rose D.J."/>
            <person name="Mayhew G.F."/>
            <person name="Evans P.S."/>
            <person name="Gregor J."/>
            <person name="Kirkpatrick H.A."/>
            <person name="Posfai G."/>
            <person name="Hackett J."/>
            <person name="Klink S."/>
            <person name="Boutin A."/>
            <person name="Shao Y."/>
            <person name="Miller L."/>
            <person name="Grotbeck E.J."/>
            <person name="Davis N.W."/>
            <person name="Lim A."/>
            <person name="Dimalanta E.T."/>
            <person name="Potamousis K."/>
            <person name="Apodaca J."/>
            <person name="Anantharaman T.S."/>
            <person name="Lin J."/>
            <person name="Yen G."/>
            <person name="Schwartz D.C."/>
            <person name="Welch R.A."/>
            <person name="Blattner F.R."/>
        </authorList>
    </citation>
    <scope>NUCLEOTIDE SEQUENCE [LARGE SCALE GENOMIC DNA]</scope>
    <source>
        <strain>O157:H7 / EDL933 / ATCC 700927 / EHEC</strain>
    </source>
</reference>
<reference key="2">
    <citation type="journal article" date="2001" name="DNA Res.">
        <title>Complete genome sequence of enterohemorrhagic Escherichia coli O157:H7 and genomic comparison with a laboratory strain K-12.</title>
        <authorList>
            <person name="Hayashi T."/>
            <person name="Makino K."/>
            <person name="Ohnishi M."/>
            <person name="Kurokawa K."/>
            <person name="Ishii K."/>
            <person name="Yokoyama K."/>
            <person name="Han C.-G."/>
            <person name="Ohtsubo E."/>
            <person name="Nakayama K."/>
            <person name="Murata T."/>
            <person name="Tanaka M."/>
            <person name="Tobe T."/>
            <person name="Iida T."/>
            <person name="Takami H."/>
            <person name="Honda T."/>
            <person name="Sasakawa C."/>
            <person name="Ogasawara N."/>
            <person name="Yasunaga T."/>
            <person name="Kuhara S."/>
            <person name="Shiba T."/>
            <person name="Hattori M."/>
            <person name="Shinagawa H."/>
        </authorList>
    </citation>
    <scope>NUCLEOTIDE SEQUENCE [LARGE SCALE GENOMIC DNA]</scope>
    <source>
        <strain>O157:H7 / Sakai / RIMD 0509952 / EHEC</strain>
    </source>
</reference>
<comment type="subcellular location">
    <subcellularLocation>
        <location evidence="1">Fimbrium</location>
    </subcellularLocation>
</comment>
<comment type="similarity">
    <text evidence="3">Belongs to the fimbrial protein family.</text>
</comment>
<comment type="sequence caution" evidence="3">
    <conflict type="erroneous initiation">
        <sequence resource="EMBL-CDS" id="AAG54887"/>
    </conflict>
    <text>Extended N-terminus.</text>
</comment>
<protein>
    <recommendedName>
        <fullName>Uncharacterized fimbrial-like protein SfmA</fullName>
    </recommendedName>
    <alternativeName>
        <fullName>Type-1A pilin</fullName>
    </alternativeName>
</protein>
<gene>
    <name type="primary">sfmA</name>
    <name type="ordered locus">Z0686</name>
    <name type="ordered locus">ECs0592</name>
</gene>
<organism>
    <name type="scientific">Escherichia coli O157:H7</name>
    <dbReference type="NCBI Taxonomy" id="83334"/>
    <lineage>
        <taxon>Bacteria</taxon>
        <taxon>Pseudomonadati</taxon>
        <taxon>Pseudomonadota</taxon>
        <taxon>Gammaproteobacteria</taxon>
        <taxon>Enterobacterales</taxon>
        <taxon>Enterobacteriaceae</taxon>
        <taxon>Escherichia</taxon>
    </lineage>
</organism>
<name>SFMA_ECO57</name>
<feature type="signal peptide" evidence="2">
    <location>
        <begin position="1"/>
        <end position="22"/>
    </location>
</feature>
<feature type="chain" id="PRO_0000042685" description="Uncharacterized fimbrial-like protein SfmA">
    <location>
        <begin position="23"/>
        <end position="180"/>
    </location>
</feature>
<feature type="disulfide bond" evidence="3">
    <location>
        <begin position="41"/>
        <end position="81"/>
    </location>
</feature>
<proteinExistence type="inferred from homology"/>
<evidence type="ECO:0000250" key="1"/>
<evidence type="ECO:0000255" key="2"/>
<evidence type="ECO:0000305" key="3"/>
<dbReference type="EMBL" id="AE005174">
    <property type="protein sequence ID" value="AAG54887.1"/>
    <property type="status" value="ALT_INIT"/>
    <property type="molecule type" value="Genomic_DNA"/>
</dbReference>
<dbReference type="EMBL" id="BA000007">
    <property type="protein sequence ID" value="BAB34015.2"/>
    <property type="molecule type" value="Genomic_DNA"/>
</dbReference>
<dbReference type="RefSeq" id="NP_308619.2">
    <property type="nucleotide sequence ID" value="NC_002695.1"/>
</dbReference>
<dbReference type="SMR" id="P0ABW6"/>
<dbReference type="STRING" id="155864.Z0686"/>
<dbReference type="GeneID" id="916947"/>
<dbReference type="KEGG" id="ece:Z0686"/>
<dbReference type="KEGG" id="ecs:ECs_0592"/>
<dbReference type="PATRIC" id="fig|386585.9.peg.699"/>
<dbReference type="eggNOG" id="COG3539">
    <property type="taxonomic scope" value="Bacteria"/>
</dbReference>
<dbReference type="HOGENOM" id="CLU_088965_0_0_6"/>
<dbReference type="OMA" id="ATFVMKY"/>
<dbReference type="Proteomes" id="UP000000558">
    <property type="component" value="Chromosome"/>
</dbReference>
<dbReference type="Proteomes" id="UP000002519">
    <property type="component" value="Chromosome"/>
</dbReference>
<dbReference type="GO" id="GO:0009289">
    <property type="term" value="C:pilus"/>
    <property type="evidence" value="ECO:0007669"/>
    <property type="project" value="UniProtKB-SubCell"/>
</dbReference>
<dbReference type="GO" id="GO:0043709">
    <property type="term" value="P:cell adhesion involved in single-species biofilm formation"/>
    <property type="evidence" value="ECO:0007669"/>
    <property type="project" value="TreeGrafter"/>
</dbReference>
<dbReference type="FunFam" id="2.60.40.1090:FF:000001">
    <property type="entry name" value="Type-1 fimbrial major subunit"/>
    <property type="match status" value="1"/>
</dbReference>
<dbReference type="Gene3D" id="2.60.40.1090">
    <property type="entry name" value="Fimbrial-type adhesion domain"/>
    <property type="match status" value="1"/>
</dbReference>
<dbReference type="InterPro" id="IPR000259">
    <property type="entry name" value="Adhesion_dom_fimbrial"/>
</dbReference>
<dbReference type="InterPro" id="IPR036937">
    <property type="entry name" value="Adhesion_dom_fimbrial_sf"/>
</dbReference>
<dbReference type="InterPro" id="IPR008966">
    <property type="entry name" value="Adhesion_dom_sf"/>
</dbReference>
<dbReference type="InterPro" id="IPR050263">
    <property type="entry name" value="Bact_Fimbrial_Adh_Pro"/>
</dbReference>
<dbReference type="NCBIfam" id="NF011741">
    <property type="entry name" value="PRK15194.1"/>
    <property type="match status" value="1"/>
</dbReference>
<dbReference type="PANTHER" id="PTHR33420">
    <property type="entry name" value="FIMBRIAL SUBUNIT ELFA-RELATED"/>
    <property type="match status" value="1"/>
</dbReference>
<dbReference type="PANTHER" id="PTHR33420:SF12">
    <property type="entry name" value="FIMBRIN-LIKE PROTEIN FIMI-RELATED"/>
    <property type="match status" value="1"/>
</dbReference>
<dbReference type="Pfam" id="PF00419">
    <property type="entry name" value="Fimbrial"/>
    <property type="match status" value="1"/>
</dbReference>
<dbReference type="SUPFAM" id="SSF49401">
    <property type="entry name" value="Bacterial adhesins"/>
    <property type="match status" value="1"/>
</dbReference>
<keyword id="KW-1015">Disulfide bond</keyword>
<keyword id="KW-0281">Fimbrium</keyword>
<keyword id="KW-1185">Reference proteome</keyword>
<keyword id="KW-0732">Signal</keyword>